<name>NB5R4_HUMAN</name>
<dbReference type="EC" id="1.6.2.2" evidence="12"/>
<dbReference type="EMBL" id="EU448291">
    <property type="protein sequence ID" value="ACA06109.1"/>
    <property type="molecule type" value="Genomic_DNA"/>
</dbReference>
<dbReference type="EMBL" id="AL034347">
    <property type="status" value="NOT_ANNOTATED_CDS"/>
    <property type="molecule type" value="Genomic_DNA"/>
</dbReference>
<dbReference type="EMBL" id="AL139232">
    <property type="status" value="NOT_ANNOTATED_CDS"/>
    <property type="molecule type" value="Genomic_DNA"/>
</dbReference>
<dbReference type="EMBL" id="BC025380">
    <property type="protein sequence ID" value="AAH25380.2"/>
    <property type="molecule type" value="mRNA"/>
</dbReference>
<dbReference type="EMBL" id="AF169803">
    <property type="protein sequence ID" value="AAF04812.1"/>
    <property type="status" value="ALT_INIT"/>
    <property type="molecule type" value="mRNA"/>
</dbReference>
<dbReference type="CCDS" id="CCDS5000.2"/>
<dbReference type="RefSeq" id="NP_057314.2">
    <property type="nucleotide sequence ID" value="NM_016230.4"/>
</dbReference>
<dbReference type="PDB" id="3LF5">
    <property type="method" value="X-ray"/>
    <property type="resolution" value="1.25 A"/>
    <property type="chains" value="A/B=51-137"/>
</dbReference>
<dbReference type="PDB" id="6MV1">
    <property type="method" value="X-ray"/>
    <property type="resolution" value="2.15 A"/>
    <property type="chains" value="A=164-521"/>
</dbReference>
<dbReference type="PDB" id="6MV2">
    <property type="method" value="X-ray"/>
    <property type="resolution" value="2.05 A"/>
    <property type="chains" value="A=164-521"/>
</dbReference>
<dbReference type="PDBsum" id="3LF5"/>
<dbReference type="PDBsum" id="6MV1"/>
<dbReference type="PDBsum" id="6MV2"/>
<dbReference type="SMR" id="Q7L1T6"/>
<dbReference type="BioGRID" id="119347">
    <property type="interactions" value="19"/>
</dbReference>
<dbReference type="FunCoup" id="Q7L1T6">
    <property type="interactions" value="2383"/>
</dbReference>
<dbReference type="IntAct" id="Q7L1T6">
    <property type="interactions" value="2"/>
</dbReference>
<dbReference type="STRING" id="9606.ENSP00000358695"/>
<dbReference type="iPTMnet" id="Q7L1T6"/>
<dbReference type="PhosphoSitePlus" id="Q7L1T6"/>
<dbReference type="BioMuta" id="CYB5R4"/>
<dbReference type="jPOST" id="Q7L1T6"/>
<dbReference type="MassIVE" id="Q7L1T6"/>
<dbReference type="PaxDb" id="9606-ENSP00000358695"/>
<dbReference type="PeptideAtlas" id="Q7L1T6"/>
<dbReference type="ProteomicsDB" id="68750"/>
<dbReference type="Pumba" id="Q7L1T6"/>
<dbReference type="TopDownProteomics" id="Q7L1T6"/>
<dbReference type="Antibodypedia" id="18533">
    <property type="antibodies" value="153 antibodies from 29 providers"/>
</dbReference>
<dbReference type="DNASU" id="51167"/>
<dbReference type="Ensembl" id="ENST00000369681.10">
    <property type="protein sequence ID" value="ENSP00000358695.3"/>
    <property type="gene ID" value="ENSG00000065615.14"/>
</dbReference>
<dbReference type="GeneID" id="51167"/>
<dbReference type="KEGG" id="hsa:51167"/>
<dbReference type="MANE-Select" id="ENST00000369681.10">
    <property type="protein sequence ID" value="ENSP00000358695.3"/>
    <property type="RefSeq nucleotide sequence ID" value="NM_016230.4"/>
    <property type="RefSeq protein sequence ID" value="NP_057314.2"/>
</dbReference>
<dbReference type="UCSC" id="uc003pkf.4">
    <property type="organism name" value="human"/>
</dbReference>
<dbReference type="AGR" id="HGNC:20147"/>
<dbReference type="CTD" id="51167"/>
<dbReference type="DisGeNET" id="51167"/>
<dbReference type="GeneCards" id="CYB5R4"/>
<dbReference type="HGNC" id="HGNC:20147">
    <property type="gene designation" value="CYB5R4"/>
</dbReference>
<dbReference type="HPA" id="ENSG00000065615">
    <property type="expression patterns" value="Low tissue specificity"/>
</dbReference>
<dbReference type="MIM" id="608343">
    <property type="type" value="gene"/>
</dbReference>
<dbReference type="neXtProt" id="NX_Q7L1T6"/>
<dbReference type="OpenTargets" id="ENSG00000065615"/>
<dbReference type="PharmGKB" id="PA134904907"/>
<dbReference type="VEuPathDB" id="HostDB:ENSG00000065615"/>
<dbReference type="eggNOG" id="KOG0534">
    <property type="taxonomic scope" value="Eukaryota"/>
</dbReference>
<dbReference type="eggNOG" id="KOG0536">
    <property type="taxonomic scope" value="Eukaryota"/>
</dbReference>
<dbReference type="GeneTree" id="ENSGT00940000155536"/>
<dbReference type="HOGENOM" id="CLU_003827_0_2_1"/>
<dbReference type="InParanoid" id="Q7L1T6"/>
<dbReference type="OMA" id="ERFSCTN"/>
<dbReference type="OrthoDB" id="432299at2759"/>
<dbReference type="PAN-GO" id="Q7L1T6">
    <property type="GO annotations" value="5 GO annotations based on evolutionary models"/>
</dbReference>
<dbReference type="PhylomeDB" id="Q7L1T6"/>
<dbReference type="TreeFam" id="TF313874"/>
<dbReference type="BRENDA" id="1.6.2.2">
    <property type="organism ID" value="2681"/>
</dbReference>
<dbReference type="PathwayCommons" id="Q7L1T6"/>
<dbReference type="Reactome" id="R-HSA-1237044">
    <property type="pathway name" value="Erythrocytes take up carbon dioxide and release oxygen"/>
</dbReference>
<dbReference type="SignaLink" id="Q7L1T6"/>
<dbReference type="BioGRID-ORCS" id="51167">
    <property type="hits" value="212 hits in 1163 CRISPR screens"/>
</dbReference>
<dbReference type="ChiTaRS" id="CYB5R4">
    <property type="organism name" value="human"/>
</dbReference>
<dbReference type="EvolutionaryTrace" id="Q7L1T6"/>
<dbReference type="GeneWiki" id="CYB5R4"/>
<dbReference type="GenomeRNAi" id="51167"/>
<dbReference type="Pharos" id="Q7L1T6">
    <property type="development level" value="Tbio"/>
</dbReference>
<dbReference type="PRO" id="PR:Q7L1T6"/>
<dbReference type="Proteomes" id="UP000005640">
    <property type="component" value="Chromosome 6"/>
</dbReference>
<dbReference type="RNAct" id="Q7L1T6">
    <property type="molecule type" value="protein"/>
</dbReference>
<dbReference type="Bgee" id="ENSG00000065615">
    <property type="expression patterns" value="Expressed in monocyte and 181 other cell types or tissues"/>
</dbReference>
<dbReference type="ExpressionAtlas" id="Q7L1T6">
    <property type="expression patterns" value="baseline and differential"/>
</dbReference>
<dbReference type="GO" id="GO:0005737">
    <property type="term" value="C:cytoplasm"/>
    <property type="evidence" value="ECO:0000318"/>
    <property type="project" value="GO_Central"/>
</dbReference>
<dbReference type="GO" id="GO:0005783">
    <property type="term" value="C:endoplasmic reticulum"/>
    <property type="evidence" value="ECO:0000314"/>
    <property type="project" value="UniProtKB"/>
</dbReference>
<dbReference type="GO" id="GO:0005789">
    <property type="term" value="C:endoplasmic reticulum membrane"/>
    <property type="evidence" value="ECO:0000304"/>
    <property type="project" value="Reactome"/>
</dbReference>
<dbReference type="GO" id="GO:0048471">
    <property type="term" value="C:perinuclear region of cytoplasm"/>
    <property type="evidence" value="ECO:0000314"/>
    <property type="project" value="UniProtKB"/>
</dbReference>
<dbReference type="GO" id="GO:0004128">
    <property type="term" value="F:cytochrome-b5 reductase activity, acting on NAD(P)H"/>
    <property type="evidence" value="ECO:0000314"/>
    <property type="project" value="UniProtKB"/>
</dbReference>
<dbReference type="GO" id="GO:0020037">
    <property type="term" value="F:heme binding"/>
    <property type="evidence" value="ECO:0000318"/>
    <property type="project" value="GO_Central"/>
</dbReference>
<dbReference type="GO" id="GO:0046872">
    <property type="term" value="F:metal ion binding"/>
    <property type="evidence" value="ECO:0007669"/>
    <property type="project" value="UniProtKB-KW"/>
</dbReference>
<dbReference type="GO" id="GO:0016174">
    <property type="term" value="F:NAD(P)H oxidase H2O2-forming activity"/>
    <property type="evidence" value="ECO:0000314"/>
    <property type="project" value="UniProtKB"/>
</dbReference>
<dbReference type="GO" id="GO:0016653">
    <property type="term" value="F:oxidoreductase activity, acting on NAD(P)H, heme protein as acceptor"/>
    <property type="evidence" value="ECO:0000314"/>
    <property type="project" value="UniProtKB"/>
</dbReference>
<dbReference type="GO" id="GO:0015701">
    <property type="term" value="P:bicarbonate transport"/>
    <property type="evidence" value="ECO:0000304"/>
    <property type="project" value="Reactome"/>
</dbReference>
<dbReference type="GO" id="GO:0048468">
    <property type="term" value="P:cell development"/>
    <property type="evidence" value="ECO:0000250"/>
    <property type="project" value="UniProtKB"/>
</dbReference>
<dbReference type="GO" id="GO:0003032">
    <property type="term" value="P:detection of oxygen"/>
    <property type="evidence" value="ECO:0000303"/>
    <property type="project" value="UniProtKB"/>
</dbReference>
<dbReference type="GO" id="GO:0042593">
    <property type="term" value="P:glucose homeostasis"/>
    <property type="evidence" value="ECO:0000250"/>
    <property type="project" value="UniProtKB"/>
</dbReference>
<dbReference type="GO" id="GO:0030073">
    <property type="term" value="P:insulin secretion"/>
    <property type="evidence" value="ECO:0000250"/>
    <property type="project" value="UniProtKB"/>
</dbReference>
<dbReference type="GO" id="GO:0072593">
    <property type="term" value="P:reactive oxygen species metabolic process"/>
    <property type="evidence" value="ECO:0000314"/>
    <property type="project" value="UniProtKB"/>
</dbReference>
<dbReference type="GO" id="GO:0046677">
    <property type="term" value="P:response to antibiotic"/>
    <property type="evidence" value="ECO:0000250"/>
    <property type="project" value="UniProtKB"/>
</dbReference>
<dbReference type="GO" id="GO:0006801">
    <property type="term" value="P:superoxide metabolic process"/>
    <property type="evidence" value="ECO:0000314"/>
    <property type="project" value="UniProtKB"/>
</dbReference>
<dbReference type="CDD" id="cd06183">
    <property type="entry name" value="cyt_b5_reduct_like"/>
    <property type="match status" value="1"/>
</dbReference>
<dbReference type="CDD" id="cd06490">
    <property type="entry name" value="p23_NCB5OR"/>
    <property type="match status" value="1"/>
</dbReference>
<dbReference type="FunFam" id="2.40.30.10:FF:000063">
    <property type="entry name" value="Cytochrome b5 reductase 4"/>
    <property type="match status" value="1"/>
</dbReference>
<dbReference type="FunFam" id="3.10.120.10:FF:000001">
    <property type="entry name" value="Cytochrome b5 reductase 4"/>
    <property type="match status" value="1"/>
</dbReference>
<dbReference type="FunFam" id="3.40.50.80:FF:000021">
    <property type="entry name" value="Cytochrome b5 reductase 4"/>
    <property type="match status" value="1"/>
</dbReference>
<dbReference type="FunFam" id="2.60.40.790:FF:000019">
    <property type="entry name" value="cytochrome b5 reductase 4 isoform X1"/>
    <property type="match status" value="1"/>
</dbReference>
<dbReference type="Gene3D" id="2.60.40.790">
    <property type="match status" value="1"/>
</dbReference>
<dbReference type="Gene3D" id="3.10.120.10">
    <property type="entry name" value="Cytochrome b5-like heme/steroid binding domain"/>
    <property type="match status" value="1"/>
</dbReference>
<dbReference type="Gene3D" id="3.40.50.80">
    <property type="entry name" value="Nucleotide-binding domain of ferredoxin-NADP reductase (FNR) module"/>
    <property type="match status" value="1"/>
</dbReference>
<dbReference type="Gene3D" id="2.40.30.10">
    <property type="entry name" value="Translation factors"/>
    <property type="match status" value="1"/>
</dbReference>
<dbReference type="InterPro" id="IPR008333">
    <property type="entry name" value="Cbr1-like_FAD-bd_dom"/>
</dbReference>
<dbReference type="InterPro" id="IPR007052">
    <property type="entry name" value="CS_dom"/>
</dbReference>
<dbReference type="InterPro" id="IPR001199">
    <property type="entry name" value="Cyt_B5-like_heme/steroid-bd"/>
</dbReference>
<dbReference type="InterPro" id="IPR036400">
    <property type="entry name" value="Cyt_B5-like_heme/steroid_sf"/>
</dbReference>
<dbReference type="InterPro" id="IPR018506">
    <property type="entry name" value="Cyt_B5_heme-BS"/>
</dbReference>
<dbReference type="InterPro" id="IPR051872">
    <property type="entry name" value="Cytochrome_b5/Flavoprotein_Rdt"/>
</dbReference>
<dbReference type="InterPro" id="IPR017927">
    <property type="entry name" value="FAD-bd_FR_type"/>
</dbReference>
<dbReference type="InterPro" id="IPR039261">
    <property type="entry name" value="FNR_nucleotide-bd"/>
</dbReference>
<dbReference type="InterPro" id="IPR008978">
    <property type="entry name" value="HSP20-like_chaperone"/>
</dbReference>
<dbReference type="InterPro" id="IPR001433">
    <property type="entry name" value="OxRdtase_FAD/NAD-bd"/>
</dbReference>
<dbReference type="InterPro" id="IPR037908">
    <property type="entry name" value="p23_NCB5OR"/>
</dbReference>
<dbReference type="InterPro" id="IPR017938">
    <property type="entry name" value="Riboflavin_synthase-like_b-brl"/>
</dbReference>
<dbReference type="PANTHER" id="PTHR46237:SF1">
    <property type="entry name" value="CYTOCHROME B5 REDUCTASE 4"/>
    <property type="match status" value="1"/>
</dbReference>
<dbReference type="PANTHER" id="PTHR46237">
    <property type="entry name" value="CYTOCHROME B5 REDUCTASE 4 FAMILY MEMBER"/>
    <property type="match status" value="1"/>
</dbReference>
<dbReference type="Pfam" id="PF04969">
    <property type="entry name" value="CS"/>
    <property type="match status" value="1"/>
</dbReference>
<dbReference type="Pfam" id="PF00173">
    <property type="entry name" value="Cyt-b5"/>
    <property type="match status" value="1"/>
</dbReference>
<dbReference type="Pfam" id="PF00970">
    <property type="entry name" value="FAD_binding_6"/>
    <property type="match status" value="1"/>
</dbReference>
<dbReference type="Pfam" id="PF00175">
    <property type="entry name" value="NAD_binding_1"/>
    <property type="match status" value="1"/>
</dbReference>
<dbReference type="PRINTS" id="PR00406">
    <property type="entry name" value="CYTB5RDTASE"/>
</dbReference>
<dbReference type="PRINTS" id="PR00363">
    <property type="entry name" value="CYTOCHROMEB5"/>
</dbReference>
<dbReference type="SMART" id="SM01117">
    <property type="entry name" value="Cyt-b5"/>
    <property type="match status" value="1"/>
</dbReference>
<dbReference type="SUPFAM" id="SSF55856">
    <property type="entry name" value="Cytochrome b5-like heme/steroid binding domain"/>
    <property type="match status" value="1"/>
</dbReference>
<dbReference type="SUPFAM" id="SSF52343">
    <property type="entry name" value="Ferredoxin reductase-like, C-terminal NADP-linked domain"/>
    <property type="match status" value="1"/>
</dbReference>
<dbReference type="SUPFAM" id="SSF49764">
    <property type="entry name" value="HSP20-like chaperones"/>
    <property type="match status" value="1"/>
</dbReference>
<dbReference type="SUPFAM" id="SSF63380">
    <property type="entry name" value="Riboflavin synthase domain-like"/>
    <property type="match status" value="1"/>
</dbReference>
<dbReference type="PROSITE" id="PS51203">
    <property type="entry name" value="CS"/>
    <property type="match status" value="1"/>
</dbReference>
<dbReference type="PROSITE" id="PS00191">
    <property type="entry name" value="CYTOCHROME_B5_1"/>
    <property type="match status" value="1"/>
</dbReference>
<dbReference type="PROSITE" id="PS50255">
    <property type="entry name" value="CYTOCHROME_B5_2"/>
    <property type="match status" value="1"/>
</dbReference>
<dbReference type="PROSITE" id="PS51384">
    <property type="entry name" value="FAD_FR"/>
    <property type="match status" value="1"/>
</dbReference>
<gene>
    <name evidence="13" type="primary">CYB5R4</name>
    <name type="synonym">NCB5OR</name>
</gene>
<reference key="1">
    <citation type="submission" date="2008-02" db="EMBL/GenBank/DDBJ databases">
        <authorList>
            <consortium name="SeattleSNPs variation discovery resource"/>
        </authorList>
    </citation>
    <scope>NUCLEOTIDE SEQUENCE [GENOMIC DNA]</scope>
    <scope>VARIANTS HIS-140; ALA-267 AND SER-316</scope>
</reference>
<reference key="2">
    <citation type="journal article" date="2003" name="Nature">
        <title>The DNA sequence and analysis of human chromosome 6.</title>
        <authorList>
            <person name="Mungall A.J."/>
            <person name="Palmer S.A."/>
            <person name="Sims S.K."/>
            <person name="Edwards C.A."/>
            <person name="Ashurst J.L."/>
            <person name="Wilming L."/>
            <person name="Jones M.C."/>
            <person name="Horton R."/>
            <person name="Hunt S.E."/>
            <person name="Scott C.E."/>
            <person name="Gilbert J.G.R."/>
            <person name="Clamp M.E."/>
            <person name="Bethel G."/>
            <person name="Milne S."/>
            <person name="Ainscough R."/>
            <person name="Almeida J.P."/>
            <person name="Ambrose K.D."/>
            <person name="Andrews T.D."/>
            <person name="Ashwell R.I.S."/>
            <person name="Babbage A.K."/>
            <person name="Bagguley C.L."/>
            <person name="Bailey J."/>
            <person name="Banerjee R."/>
            <person name="Barker D.J."/>
            <person name="Barlow K.F."/>
            <person name="Bates K."/>
            <person name="Beare D.M."/>
            <person name="Beasley H."/>
            <person name="Beasley O."/>
            <person name="Bird C.P."/>
            <person name="Blakey S.E."/>
            <person name="Bray-Allen S."/>
            <person name="Brook J."/>
            <person name="Brown A.J."/>
            <person name="Brown J.Y."/>
            <person name="Burford D.C."/>
            <person name="Burrill W."/>
            <person name="Burton J."/>
            <person name="Carder C."/>
            <person name="Carter N.P."/>
            <person name="Chapman J.C."/>
            <person name="Clark S.Y."/>
            <person name="Clark G."/>
            <person name="Clee C.M."/>
            <person name="Clegg S."/>
            <person name="Cobley V."/>
            <person name="Collier R.E."/>
            <person name="Collins J.E."/>
            <person name="Colman L.K."/>
            <person name="Corby N.R."/>
            <person name="Coville G.J."/>
            <person name="Culley K.M."/>
            <person name="Dhami P."/>
            <person name="Davies J."/>
            <person name="Dunn M."/>
            <person name="Earthrowl M.E."/>
            <person name="Ellington A.E."/>
            <person name="Evans K.A."/>
            <person name="Faulkner L."/>
            <person name="Francis M.D."/>
            <person name="Frankish A."/>
            <person name="Frankland J."/>
            <person name="French L."/>
            <person name="Garner P."/>
            <person name="Garnett J."/>
            <person name="Ghori M.J."/>
            <person name="Gilby L.M."/>
            <person name="Gillson C.J."/>
            <person name="Glithero R.J."/>
            <person name="Grafham D.V."/>
            <person name="Grant M."/>
            <person name="Gribble S."/>
            <person name="Griffiths C."/>
            <person name="Griffiths M.N.D."/>
            <person name="Hall R."/>
            <person name="Halls K.S."/>
            <person name="Hammond S."/>
            <person name="Harley J.L."/>
            <person name="Hart E.A."/>
            <person name="Heath P.D."/>
            <person name="Heathcott R."/>
            <person name="Holmes S.J."/>
            <person name="Howden P.J."/>
            <person name="Howe K.L."/>
            <person name="Howell G.R."/>
            <person name="Huckle E."/>
            <person name="Humphray S.J."/>
            <person name="Humphries M.D."/>
            <person name="Hunt A.R."/>
            <person name="Johnson C.M."/>
            <person name="Joy A.A."/>
            <person name="Kay M."/>
            <person name="Keenan S.J."/>
            <person name="Kimberley A.M."/>
            <person name="King A."/>
            <person name="Laird G.K."/>
            <person name="Langford C."/>
            <person name="Lawlor S."/>
            <person name="Leongamornlert D.A."/>
            <person name="Leversha M."/>
            <person name="Lloyd C.R."/>
            <person name="Lloyd D.M."/>
            <person name="Loveland J.E."/>
            <person name="Lovell J."/>
            <person name="Martin S."/>
            <person name="Mashreghi-Mohammadi M."/>
            <person name="Maslen G.L."/>
            <person name="Matthews L."/>
            <person name="McCann O.T."/>
            <person name="McLaren S.J."/>
            <person name="McLay K."/>
            <person name="McMurray A."/>
            <person name="Moore M.J.F."/>
            <person name="Mullikin J.C."/>
            <person name="Niblett D."/>
            <person name="Nickerson T."/>
            <person name="Novik K.L."/>
            <person name="Oliver K."/>
            <person name="Overton-Larty E.K."/>
            <person name="Parker A."/>
            <person name="Patel R."/>
            <person name="Pearce A.V."/>
            <person name="Peck A.I."/>
            <person name="Phillimore B.J.C.T."/>
            <person name="Phillips S."/>
            <person name="Plumb R.W."/>
            <person name="Porter K.M."/>
            <person name="Ramsey Y."/>
            <person name="Ranby S.A."/>
            <person name="Rice C.M."/>
            <person name="Ross M.T."/>
            <person name="Searle S.M."/>
            <person name="Sehra H.K."/>
            <person name="Sheridan E."/>
            <person name="Skuce C.D."/>
            <person name="Smith S."/>
            <person name="Smith M."/>
            <person name="Spraggon L."/>
            <person name="Squares S.L."/>
            <person name="Steward C.A."/>
            <person name="Sycamore N."/>
            <person name="Tamlyn-Hall G."/>
            <person name="Tester J."/>
            <person name="Theaker A.J."/>
            <person name="Thomas D.W."/>
            <person name="Thorpe A."/>
            <person name="Tracey A."/>
            <person name="Tromans A."/>
            <person name="Tubby B."/>
            <person name="Wall M."/>
            <person name="Wallis J.M."/>
            <person name="West A.P."/>
            <person name="White S.S."/>
            <person name="Whitehead S.L."/>
            <person name="Whittaker H."/>
            <person name="Wild A."/>
            <person name="Willey D.J."/>
            <person name="Wilmer T.E."/>
            <person name="Wood J.M."/>
            <person name="Wray P.W."/>
            <person name="Wyatt J.C."/>
            <person name="Young L."/>
            <person name="Younger R.M."/>
            <person name="Bentley D.R."/>
            <person name="Coulson A."/>
            <person name="Durbin R.M."/>
            <person name="Hubbard T."/>
            <person name="Sulston J.E."/>
            <person name="Dunham I."/>
            <person name="Rogers J."/>
            <person name="Beck S."/>
        </authorList>
    </citation>
    <scope>NUCLEOTIDE SEQUENCE [LARGE SCALE GENOMIC DNA]</scope>
</reference>
<reference key="3">
    <citation type="journal article" date="2004" name="Genome Res.">
        <title>The status, quality, and expansion of the NIH full-length cDNA project: the Mammalian Gene Collection (MGC).</title>
        <authorList>
            <consortium name="The MGC Project Team"/>
        </authorList>
    </citation>
    <scope>NUCLEOTIDE SEQUENCE [LARGE SCALE MRNA]</scope>
    <source>
        <tissue>Testis</tissue>
    </source>
</reference>
<reference key="4">
    <citation type="journal article" date="1999" name="Proc. Natl. Acad. Sci. U.S.A.">
        <title>Identification of a cytochrome b-type NAD(P)H oxidoreductase ubiquitously expressed in human cells.</title>
        <authorList>
            <person name="Zhu H."/>
            <person name="Qiu H."/>
            <person name="Yoon H.-W."/>
            <person name="Huang S."/>
            <person name="Bunn H.F."/>
        </authorList>
    </citation>
    <scope>NUCLEOTIDE SEQUENCE [MRNA] OF 33-521</scope>
    <scope>CATALYTIC ACTIVITY</scope>
    <scope>SUBCELLULAR LOCATION</scope>
    <scope>HEME-BINDING</scope>
    <scope>FAD-BINDING</scope>
    <scope>TISSUE SPECIFICITY</scope>
</reference>
<reference key="5">
    <citation type="journal article" date="2012" name="Proc. Natl. Acad. Sci. U.S.A.">
        <title>N-terminal acetylome analyses and functional insights of the N-terminal acetyltransferase NatB.</title>
        <authorList>
            <person name="Van Damme P."/>
            <person name="Lasa M."/>
            <person name="Polevoda B."/>
            <person name="Gazquez C."/>
            <person name="Elosegui-Artola A."/>
            <person name="Kim D.S."/>
            <person name="De Juan-Pardo E."/>
            <person name="Demeyer K."/>
            <person name="Hole K."/>
            <person name="Larrea E."/>
            <person name="Timmerman E."/>
            <person name="Prieto J."/>
            <person name="Arnesen T."/>
            <person name="Sherman F."/>
            <person name="Gevaert K."/>
            <person name="Aldabe R."/>
        </authorList>
    </citation>
    <scope>ACETYLATION [LARGE SCALE ANALYSIS] AT MET-1</scope>
    <scope>IDENTIFICATION BY MASS SPECTROMETRY [LARGE SCALE ANALYSIS]</scope>
</reference>
<reference key="6">
    <citation type="journal article" date="2010" name="J. Biol. Chem.">
        <title>Study of the individual cytochrome b5 and cytochrome b5 reductase domains of Ncb5or reveals a unique heme pocket and a possible role of the CS domain.</title>
        <authorList>
            <person name="Deng B."/>
            <person name="Parthasarathy S."/>
            <person name="Wang W."/>
            <person name="Gibney B.R."/>
            <person name="Battaile K.P."/>
            <person name="Lovell S."/>
            <person name="Benson D.R."/>
            <person name="Zhu H."/>
        </authorList>
    </citation>
    <scope>X-RAY CRYSTALLOGRAPHY (1.25 ANGSTROMS) OF 51-137</scope>
    <scope>HEME-BINDING SITES</scope>
</reference>
<reference key="7">
    <citation type="journal article" date="2004" name="Diabetes">
        <title>Variation in NCB5OR: studies of relationships to type 2 diabetes, maturity-onset diabetes of the young, and gestational diabetes mellitus.</title>
        <authorList>
            <person name="Andersen G."/>
            <person name="Wegner L."/>
            <person name="Rose C.S."/>
            <person name="Xie J."/>
            <person name="Zhu H."/>
            <person name="Larade K."/>
            <person name="Johansen A."/>
            <person name="Ek J."/>
            <person name="Lauenborg J."/>
            <person name="Drivsholm T."/>
            <person name="Borch-Johnsen K."/>
            <person name="Damm P."/>
            <person name="Hansen T."/>
            <person name="Bunn H.F."/>
            <person name="Pedersen O."/>
        </authorList>
    </citation>
    <scope>VARIANTS ARG-187 AND ARG-223</scope>
</reference>
<reference key="8">
    <citation type="journal article" date="2004" name="J. Biol. Chem.">
        <title>NCB5OR is a novel soluble NAD(P)H reductase localized in the endoplasmic reticulum.</title>
        <authorList>
            <person name="Zhu H."/>
            <person name="Larade K."/>
            <person name="Jackson T.A."/>
            <person name="Xie J."/>
            <person name="Ladoux A."/>
            <person name="Acker H."/>
            <person name="Berchner-Pfannschmidt U."/>
            <person name="Fandrey J."/>
            <person name="Cross A.R."/>
            <person name="Lukat-Rodgers G.S."/>
            <person name="Rodgers K.R."/>
            <person name="Bunn H.F."/>
        </authorList>
    </citation>
    <scope>SUBCELLULAR LOCATION</scope>
</reference>
<reference key="9">
    <citation type="journal article" date="2006" name="Science">
        <title>The consensus coding sequences of human breast and colorectal cancers.</title>
        <authorList>
            <person name="Sjoeblom T."/>
            <person name="Jones S."/>
            <person name="Wood L.D."/>
            <person name="Parsons D.W."/>
            <person name="Lin J."/>
            <person name="Barber T.D."/>
            <person name="Mandelker D."/>
            <person name="Leary R.J."/>
            <person name="Ptak J."/>
            <person name="Silliman N."/>
            <person name="Szabo S."/>
            <person name="Buckhaults P."/>
            <person name="Farrell C."/>
            <person name="Meeh P."/>
            <person name="Markowitz S.D."/>
            <person name="Willis J."/>
            <person name="Dawson D."/>
            <person name="Willson J.K.V."/>
            <person name="Gazdar A.F."/>
            <person name="Hartigan J."/>
            <person name="Wu L."/>
            <person name="Liu C."/>
            <person name="Parmigiani G."/>
            <person name="Park B.H."/>
            <person name="Bachman K.E."/>
            <person name="Papadopoulos N."/>
            <person name="Vogelstein B."/>
            <person name="Kinzler K.W."/>
            <person name="Velculescu V.E."/>
        </authorList>
    </citation>
    <scope>VARIANTS [LARGE SCALE ANALYSIS] TYR-371 AND MET-390</scope>
</reference>
<organism>
    <name type="scientific">Homo sapiens</name>
    <name type="common">Human</name>
    <dbReference type="NCBI Taxonomy" id="9606"/>
    <lineage>
        <taxon>Eukaryota</taxon>
        <taxon>Metazoa</taxon>
        <taxon>Chordata</taxon>
        <taxon>Craniata</taxon>
        <taxon>Vertebrata</taxon>
        <taxon>Euteleostomi</taxon>
        <taxon>Mammalia</taxon>
        <taxon>Eutheria</taxon>
        <taxon>Euarchontoglires</taxon>
        <taxon>Primates</taxon>
        <taxon>Haplorrhini</taxon>
        <taxon>Catarrhini</taxon>
        <taxon>Hominidae</taxon>
        <taxon>Homo</taxon>
    </lineage>
</organism>
<feature type="chain" id="PRO_0000287556" description="Cytochrome b5 reductase 4">
    <location>
        <begin position="1"/>
        <end position="521"/>
    </location>
</feature>
<feature type="domain" description="Cytochrome b5 heme-binding" evidence="2">
    <location>
        <begin position="54"/>
        <end position="130"/>
    </location>
</feature>
<feature type="domain" description="CS" evidence="3">
    <location>
        <begin position="165"/>
        <end position="256"/>
    </location>
</feature>
<feature type="domain" description="FAD-binding FR-type" evidence="4">
    <location>
        <begin position="273"/>
        <end position="385"/>
    </location>
</feature>
<feature type="region of interest" description="Disordered" evidence="5">
    <location>
        <begin position="1"/>
        <end position="27"/>
    </location>
</feature>
<feature type="compositionally biased region" description="Polar residues" evidence="5">
    <location>
        <begin position="1"/>
        <end position="18"/>
    </location>
</feature>
<feature type="binding site" description="axial binding residue">
    <location>
        <position position="89"/>
    </location>
    <ligand>
        <name>heme</name>
        <dbReference type="ChEBI" id="CHEBI:30413"/>
    </ligand>
    <ligandPart>
        <name>Fe</name>
        <dbReference type="ChEBI" id="CHEBI:18248"/>
    </ligandPart>
</feature>
<feature type="binding site" description="axial binding residue">
    <location>
        <position position="112"/>
    </location>
    <ligand>
        <name>heme</name>
        <dbReference type="ChEBI" id="CHEBI:30413"/>
    </ligand>
    <ligandPart>
        <name>Fe</name>
        <dbReference type="ChEBI" id="CHEBI:18248"/>
    </ligandPart>
</feature>
<feature type="binding site" evidence="1">
    <location>
        <begin position="365"/>
        <end position="380"/>
    </location>
    <ligand>
        <name>FAD</name>
        <dbReference type="ChEBI" id="CHEBI:57692"/>
    </ligand>
</feature>
<feature type="binding site" evidence="1">
    <location>
        <begin position="392"/>
        <end position="424"/>
    </location>
    <ligand>
        <name>FAD</name>
        <dbReference type="ChEBI" id="CHEBI:57692"/>
    </ligand>
</feature>
<feature type="modified residue" description="N-acetylmethionine" evidence="14">
    <location>
        <position position="1"/>
    </location>
</feature>
<feature type="sequence variant" id="VAR_047967" description="In dbSNP:rs61762820." evidence="10">
    <original>R</original>
    <variation>H</variation>
    <location>
        <position position="140"/>
    </location>
</feature>
<feature type="sequence variant" id="VAR_032323" description="In dbSNP:rs143478181." evidence="8">
    <original>Q</original>
    <variation>R</variation>
    <location>
        <position position="187"/>
    </location>
</feature>
<feature type="sequence variant" id="VAR_032324" description="In dbSNP:rs141290525." evidence="8">
    <original>H</original>
    <variation>R</variation>
    <location>
        <position position="223"/>
    </location>
</feature>
<feature type="sequence variant" id="VAR_047968" description="In dbSNP:rs61382555." evidence="10">
    <original>P</original>
    <variation>A</variation>
    <location>
        <position position="267"/>
    </location>
</feature>
<feature type="sequence variant" id="VAR_032325" description="In dbSNP:rs10080628.">
    <original>S</original>
    <variation>P</variation>
    <location>
        <position position="282"/>
    </location>
</feature>
<feature type="sequence variant" id="VAR_047969" description="In dbSNP:rs10080628." evidence="10">
    <original>P</original>
    <variation>S</variation>
    <location>
        <position position="316"/>
    </location>
</feature>
<feature type="sequence variant" id="VAR_036240" description="In a breast cancer sample; somatic mutation." evidence="9">
    <original>D</original>
    <variation>Y</variation>
    <location>
        <position position="371"/>
    </location>
</feature>
<feature type="sequence variant" id="VAR_036241" description="In a breast cancer sample; somatic mutation." evidence="9">
    <original>L</original>
    <variation>M</variation>
    <location>
        <position position="390"/>
    </location>
</feature>
<feature type="strand" evidence="15">
    <location>
        <begin position="53"/>
        <end position="57"/>
    </location>
</feature>
<feature type="helix" evidence="15">
    <location>
        <begin position="59"/>
        <end position="64"/>
    </location>
</feature>
<feature type="strand" evidence="15">
    <location>
        <begin position="70"/>
        <end position="75"/>
    </location>
</feature>
<feature type="strand" evidence="15">
    <location>
        <begin position="78"/>
        <end position="81"/>
    </location>
</feature>
<feature type="helix" evidence="15">
    <location>
        <begin position="83"/>
        <end position="85"/>
    </location>
</feature>
<feature type="turn" evidence="15">
    <location>
        <begin position="86"/>
        <end position="88"/>
    </location>
</feature>
<feature type="helix" evidence="15">
    <location>
        <begin position="93"/>
        <end position="97"/>
    </location>
</feature>
<feature type="turn" evidence="15">
    <location>
        <begin position="98"/>
        <end position="101"/>
    </location>
</feature>
<feature type="helix" evidence="15">
    <location>
        <begin position="105"/>
        <end position="112"/>
    </location>
</feature>
<feature type="helix" evidence="15">
    <location>
        <begin position="117"/>
        <end position="120"/>
    </location>
</feature>
<feature type="helix" evidence="15">
    <location>
        <begin position="122"/>
        <end position="124"/>
    </location>
</feature>
<feature type="strand" evidence="15">
    <location>
        <begin position="125"/>
        <end position="129"/>
    </location>
</feature>
<feature type="helix" evidence="15">
    <location>
        <begin position="133"/>
        <end position="136"/>
    </location>
</feature>
<feature type="strand" evidence="16">
    <location>
        <begin position="169"/>
        <end position="174"/>
    </location>
</feature>
<feature type="strand" evidence="16">
    <location>
        <begin position="176"/>
        <end position="184"/>
    </location>
</feature>
<feature type="strand" evidence="16">
    <location>
        <begin position="194"/>
        <end position="199"/>
    </location>
</feature>
<feature type="strand" evidence="16">
    <location>
        <begin position="201"/>
        <end position="210"/>
    </location>
</feature>
<feature type="strand" evidence="16">
    <location>
        <begin position="213"/>
        <end position="223"/>
    </location>
</feature>
<feature type="strand" evidence="16">
    <location>
        <begin position="230"/>
        <end position="234"/>
    </location>
</feature>
<feature type="turn" evidence="16">
    <location>
        <begin position="235"/>
        <end position="238"/>
    </location>
</feature>
<feature type="strand" evidence="16">
    <location>
        <begin position="239"/>
        <end position="248"/>
    </location>
</feature>
<feature type="strand" evidence="16">
    <location>
        <begin position="253"/>
        <end position="258"/>
    </location>
</feature>
<feature type="turn" evidence="16">
    <location>
        <begin position="260"/>
        <end position="263"/>
    </location>
</feature>
<feature type="strand" evidence="16">
    <location>
        <begin position="264"/>
        <end position="267"/>
    </location>
</feature>
<feature type="helix" evidence="16">
    <location>
        <begin position="268"/>
        <end position="270"/>
    </location>
</feature>
<feature type="strand" evidence="16">
    <location>
        <begin position="275"/>
        <end position="296"/>
    </location>
</feature>
<feature type="strand" evidence="16">
    <location>
        <begin position="310"/>
        <end position="317"/>
    </location>
</feature>
<feature type="strand" evidence="16">
    <location>
        <begin position="320"/>
        <end position="326"/>
    </location>
</feature>
<feature type="turn" evidence="16">
    <location>
        <begin position="335"/>
        <end position="337"/>
    </location>
</feature>
<feature type="strand" evidence="16">
    <location>
        <begin position="347"/>
        <end position="353"/>
    </location>
</feature>
<feature type="helix" evidence="16">
    <location>
        <begin position="360"/>
        <end position="366"/>
    </location>
</feature>
<feature type="strand" evidence="16">
    <location>
        <begin position="372"/>
        <end position="376"/>
    </location>
</feature>
<feature type="helix" evidence="16">
    <location>
        <begin position="384"/>
        <end position="387"/>
    </location>
</feature>
<feature type="strand" evidence="16">
    <location>
        <begin position="392"/>
        <end position="398"/>
    </location>
</feature>
<feature type="helix" evidence="16">
    <location>
        <begin position="399"/>
        <end position="402"/>
    </location>
</feature>
<feature type="helix" evidence="16">
    <location>
        <begin position="403"/>
        <end position="414"/>
    </location>
</feature>
<feature type="strand" evidence="16">
    <location>
        <begin position="421"/>
        <end position="430"/>
    </location>
</feature>
<feature type="helix" evidence="16">
    <location>
        <begin position="431"/>
        <end position="433"/>
    </location>
</feature>
<feature type="helix" evidence="16">
    <location>
        <begin position="437"/>
        <end position="445"/>
    </location>
</feature>
<feature type="strand" evidence="16">
    <location>
        <begin position="450"/>
        <end position="458"/>
    </location>
</feature>
<feature type="strand" evidence="16">
    <location>
        <begin position="465"/>
        <end position="468"/>
    </location>
</feature>
<feature type="helix" evidence="16">
    <location>
        <begin position="472"/>
        <end position="478"/>
    </location>
</feature>
<feature type="strand" evidence="16">
    <location>
        <begin position="488"/>
        <end position="495"/>
    </location>
</feature>
<feature type="helix" evidence="16">
    <location>
        <begin position="496"/>
        <end position="508"/>
    </location>
</feature>
<feature type="helix" evidence="16">
    <location>
        <begin position="513"/>
        <end position="515"/>
    </location>
</feature>
<feature type="strand" evidence="16">
    <location>
        <begin position="516"/>
        <end position="519"/>
    </location>
</feature>
<sequence length="521" mass="59474">MLNVPSQSFPAPRSQQRVASGGRSKVPLKQGRSLMDWIRLTKSGKDLTGLKGRLIEVTEEELKKHNKKDDCWICIRGFVYNVSPYMEYHPGGEDELMRAAGSDGTELFDQVHRWVNYESMLKECLVGRMAIKPAVLKDYREEEKKVLNGMLPKSQVTDTLAKEGPSYPSYDWFQTDSLVTIAIYTKQKDINLDSIIVDHQNDSFRAETIIKDCLYLIHIGLSHEVQEDFSVRVVESVGKIEIVLQKKENTSWDFLGHPLKNHNSLIPRKDTGLYYRKCQLISKEDVTHDTRLFCLMLPPSTHLQVPIGQHVYLKLPITGTEIVKPYTPVSGSLLSEFKEPVLPNNKYIYFLIKIYPTGLFTPELDRLQIGDFVSVSSPEGNFKISKFQELEDLFLLAAGTGFTPMVKILNYALTDIPSLRKVKLMFFNKTEDDIIWRSQLEKLAFKDKRLDVEFVLSAPISEWNGKQGHISPALLSEFLKRNLDKSKVLVCICGPVPFTEQGVRLLHDLNFSKNEIHSFTA</sequence>
<keyword id="KW-0002">3D-structure</keyword>
<keyword id="KW-0007">Acetylation</keyword>
<keyword id="KW-0256">Endoplasmic reticulum</keyword>
<keyword id="KW-0274">FAD</keyword>
<keyword id="KW-0285">Flavoprotein</keyword>
<keyword id="KW-0349">Heme</keyword>
<keyword id="KW-0408">Iron</keyword>
<keyword id="KW-0479">Metal-binding</keyword>
<keyword id="KW-0520">NAD</keyword>
<keyword id="KW-0560">Oxidoreductase</keyword>
<keyword id="KW-1267">Proteomics identification</keyword>
<keyword id="KW-1185">Reference proteome</keyword>
<comment type="function">
    <text>NADH-cytochrome b5 reductase involved in endoplasmic reticulum stress response pathway. Plays a critical role in protecting pancreatic beta-cells against oxidant stress, possibly by protecting the cell from excess buildup of reactive oxygen species (ROS). Reduces a variety of substrates in vitro, such as cytochrome c, feericyanide and methemoglobin.</text>
</comment>
<comment type="catalytic activity">
    <reaction evidence="12">
        <text>2 Fe(III)-[cytochrome b5] + NADH = 2 Fe(II)-[cytochrome b5] + NAD(+) + H(+)</text>
        <dbReference type="Rhea" id="RHEA:46680"/>
        <dbReference type="Rhea" id="RHEA-COMP:10438"/>
        <dbReference type="Rhea" id="RHEA-COMP:10439"/>
        <dbReference type="ChEBI" id="CHEBI:15378"/>
        <dbReference type="ChEBI" id="CHEBI:29033"/>
        <dbReference type="ChEBI" id="CHEBI:29034"/>
        <dbReference type="ChEBI" id="CHEBI:57540"/>
        <dbReference type="ChEBI" id="CHEBI:57945"/>
        <dbReference type="EC" id="1.6.2.2"/>
    </reaction>
</comment>
<comment type="cofactor">
    <cofactor evidence="6">
        <name>FAD</name>
        <dbReference type="ChEBI" id="CHEBI:57692"/>
    </cofactor>
</comment>
<comment type="biophysicochemical properties">
    <kinetics>
        <KM>25 mM for O(2)</KM>
    </kinetics>
    <redoxPotential>
        <text>E(0) is -108 mV.</text>
    </redoxPotential>
</comment>
<comment type="subcellular location">
    <subcellularLocation>
        <location evidence="6 7">Endoplasmic reticulum</location>
    </subcellularLocation>
    <text>Soluble protein.</text>
</comment>
<comment type="tissue specificity">
    <text evidence="6">Widely expressed.</text>
</comment>
<comment type="polymorphism">
    <text evidence="8">Variants Arg-187 and Arg-223 do not influence the pathogenesis of non-autoimmune diabetes.</text>
</comment>
<comment type="similarity">
    <text evidence="11">Belongs to the flavoprotein pyridine nucleotide cytochrome reductase family.</text>
</comment>
<comment type="sequence caution" evidence="11">
    <conflict type="erroneous initiation">
        <sequence resource="EMBL-CDS" id="AAF04812"/>
    </conflict>
</comment>
<proteinExistence type="evidence at protein level"/>
<protein>
    <recommendedName>
        <fullName evidence="11">Cytochrome b5 reductase 4</fullName>
        <ecNumber evidence="12">1.6.2.2</ecNumber>
    </recommendedName>
    <alternativeName>
        <fullName>Flavohemoprotein b5/b5R</fullName>
        <shortName>b5+b5R</shortName>
    </alternativeName>
    <alternativeName>
        <fullName>N-terminal cytochrome b5 and cytochrome b5 oxidoreductase domain-containing protein</fullName>
    </alternativeName>
    <alternativeName>
        <fullName>cb5/cb5R</fullName>
    </alternativeName>
</protein>
<evidence type="ECO:0000250" key="1"/>
<evidence type="ECO:0000255" key="2">
    <source>
        <dbReference type="PROSITE-ProRule" id="PRU00279"/>
    </source>
</evidence>
<evidence type="ECO:0000255" key="3">
    <source>
        <dbReference type="PROSITE-ProRule" id="PRU00547"/>
    </source>
</evidence>
<evidence type="ECO:0000255" key="4">
    <source>
        <dbReference type="PROSITE-ProRule" id="PRU00716"/>
    </source>
</evidence>
<evidence type="ECO:0000256" key="5">
    <source>
        <dbReference type="SAM" id="MobiDB-lite"/>
    </source>
</evidence>
<evidence type="ECO:0000269" key="6">
    <source>
    </source>
</evidence>
<evidence type="ECO:0000269" key="7">
    <source>
    </source>
</evidence>
<evidence type="ECO:0000269" key="8">
    <source>
    </source>
</evidence>
<evidence type="ECO:0000269" key="9">
    <source>
    </source>
</evidence>
<evidence type="ECO:0000269" key="10">
    <source ref="1"/>
</evidence>
<evidence type="ECO:0000305" key="11"/>
<evidence type="ECO:0000305" key="12">
    <source>
    </source>
</evidence>
<evidence type="ECO:0000312" key="13">
    <source>
        <dbReference type="HGNC" id="HGNC:20147"/>
    </source>
</evidence>
<evidence type="ECO:0007744" key="14">
    <source>
    </source>
</evidence>
<evidence type="ECO:0007829" key="15">
    <source>
        <dbReference type="PDB" id="3LF5"/>
    </source>
</evidence>
<evidence type="ECO:0007829" key="16">
    <source>
        <dbReference type="PDB" id="6MV2"/>
    </source>
</evidence>
<accession>Q7L1T6</accession>
<accession>B1AEM2</accession>
<accession>Q5TGI9</accession>
<accession>Q9NUE4</accession>
<accession>Q9UHI9</accession>